<proteinExistence type="evidence at transcript level"/>
<name>TM168_XENLA</name>
<comment type="function">
    <text evidence="1">Plays a key role in maintaining the cardiac electrical stability by modulating cell surface expression of SCN5A.</text>
</comment>
<comment type="subcellular location">
    <subcellularLocation>
        <location evidence="2">Nucleus membrane</location>
        <topology evidence="3">Multi-pass membrane protein</topology>
    </subcellularLocation>
</comment>
<comment type="similarity">
    <text evidence="4">Belongs to the TMEM168 family.</text>
</comment>
<keyword id="KW-0325">Glycoprotein</keyword>
<keyword id="KW-0472">Membrane</keyword>
<keyword id="KW-0539">Nucleus</keyword>
<keyword id="KW-1185">Reference proteome</keyword>
<keyword id="KW-0812">Transmembrane</keyword>
<keyword id="KW-1133">Transmembrane helix</keyword>
<gene>
    <name type="primary">tmem168</name>
</gene>
<sequence>MCRSLRYCVSHCLYTAMTRLEEANREVNMYSSVRYLGYLAQLSLLVAICMGLYVRWDQTDDSFILVIFILGLVIFAIASILYYYFSMEAASLSLCNLWFGFLLGLLCFIDSSTFQHDLKEEATKYLLVSSIIIKTLSALVERICGCVRHRPTLLTSSEFLELVGFAIASTIMLMQKSLSIILLVAALAMIIIDLRMKSFLSIAILVVFASLTPELFFRSLDIPVNPYALSCFFFCIISNPFLDVYFSGLSVTERWKPYLYRGRFCRRFSVISIGLIELVFFVFAALKLGDLHLWYFVIPGFSIFGIFWLICHIIFLITLWGFNTKLNECHKVYSTHRPDNNSLDRVMASKGMRHFCLISERLVFFSLLATIILGAVSWQSSNGLFISIFLIVLPLESMAHGLFHELGNCLGGTSIGYAVVIPTNFCSPNGQPMLLPPEHVEELNLRSTGMLNSIQRFFASHMIETYGCDYSTSGLNFDTLHSKLKSFLDLRTSDGPRHDTYIIYYTGHSHSTGEWALAGGETLRFETLLEWWREKNGSFCSRLIIVLDTESSQPWVKEVRRVGDQYVAVQGAEMARVVDIEEADPPQLGDFTKEWVEYNCNPDNNINWTEKGRTVKAVYAVSKPWSDYTLHLPTGNDVTKHWMTYFPHITYPLVHLANWCGALNMFWLCKICYKCLKRLKMNWFLPAVLDTGQGFKLVKS</sequence>
<protein>
    <recommendedName>
        <fullName>Transmembrane protein 168</fullName>
    </recommendedName>
</protein>
<organism>
    <name type="scientific">Xenopus laevis</name>
    <name type="common">African clawed frog</name>
    <dbReference type="NCBI Taxonomy" id="8355"/>
    <lineage>
        <taxon>Eukaryota</taxon>
        <taxon>Metazoa</taxon>
        <taxon>Chordata</taxon>
        <taxon>Craniata</taxon>
        <taxon>Vertebrata</taxon>
        <taxon>Euteleostomi</taxon>
        <taxon>Amphibia</taxon>
        <taxon>Batrachia</taxon>
        <taxon>Anura</taxon>
        <taxon>Pipoidea</taxon>
        <taxon>Pipidae</taxon>
        <taxon>Xenopodinae</taxon>
        <taxon>Xenopus</taxon>
        <taxon>Xenopus</taxon>
    </lineage>
</organism>
<accession>Q7ZY86</accession>
<feature type="chain" id="PRO_0000284635" description="Transmembrane protein 168">
    <location>
        <begin position="1"/>
        <end position="700"/>
    </location>
</feature>
<feature type="transmembrane region" description="Helical" evidence="3">
    <location>
        <begin position="36"/>
        <end position="56"/>
    </location>
</feature>
<feature type="transmembrane region" description="Helical" evidence="3">
    <location>
        <begin position="63"/>
        <end position="83"/>
    </location>
</feature>
<feature type="transmembrane region" description="Helical" evidence="3">
    <location>
        <begin position="89"/>
        <end position="109"/>
    </location>
</feature>
<feature type="transmembrane region" description="Helical" evidence="3">
    <location>
        <begin position="171"/>
        <end position="191"/>
    </location>
</feature>
<feature type="transmembrane region" description="Helical" evidence="3">
    <location>
        <begin position="197"/>
        <end position="217"/>
    </location>
</feature>
<feature type="transmembrane region" description="Helical" evidence="3">
    <location>
        <begin position="231"/>
        <end position="251"/>
    </location>
</feature>
<feature type="transmembrane region" description="Helical" evidence="3">
    <location>
        <begin position="268"/>
        <end position="288"/>
    </location>
</feature>
<feature type="transmembrane region" description="Helical" evidence="3">
    <location>
        <begin position="297"/>
        <end position="317"/>
    </location>
</feature>
<feature type="transmembrane region" description="Helical" evidence="3">
    <location>
        <begin position="355"/>
        <end position="375"/>
    </location>
</feature>
<feature type="transmembrane region" description="Helical" evidence="3">
    <location>
        <begin position="383"/>
        <end position="403"/>
    </location>
</feature>
<feature type="glycosylation site" description="N-linked (GlcNAc...) asparagine" evidence="3">
    <location>
        <position position="340"/>
    </location>
</feature>
<feature type="glycosylation site" description="N-linked (GlcNAc...) asparagine" evidence="3">
    <location>
        <position position="536"/>
    </location>
</feature>
<feature type="glycosylation site" description="N-linked (GlcNAc...) asparagine" evidence="3">
    <location>
        <position position="607"/>
    </location>
</feature>
<reference key="1">
    <citation type="submission" date="2003-01" db="EMBL/GenBank/DDBJ databases">
        <authorList>
            <consortium name="NIH - Xenopus Gene Collection (XGC) project"/>
        </authorList>
    </citation>
    <scope>NUCLEOTIDE SEQUENCE [LARGE SCALE MRNA]</scope>
    <source>
        <tissue>Embryo</tissue>
    </source>
</reference>
<dbReference type="EMBL" id="BC043897">
    <property type="protein sequence ID" value="AAH43897.1"/>
    <property type="molecule type" value="mRNA"/>
</dbReference>
<dbReference type="RefSeq" id="NP_001080848.1">
    <property type="nucleotide sequence ID" value="NM_001087379.1"/>
</dbReference>
<dbReference type="GlyCosmos" id="Q7ZY86">
    <property type="glycosylation" value="3 sites, No reported glycans"/>
</dbReference>
<dbReference type="DNASU" id="380542"/>
<dbReference type="GeneID" id="380542"/>
<dbReference type="KEGG" id="xla:380542"/>
<dbReference type="AGR" id="Xenbase:XB-GENE-982332"/>
<dbReference type="CTD" id="380542"/>
<dbReference type="Xenbase" id="XB-GENE-982332">
    <property type="gene designation" value="tmem168.S"/>
</dbReference>
<dbReference type="OrthoDB" id="5967342at2759"/>
<dbReference type="Proteomes" id="UP000186698">
    <property type="component" value="Chromosome 3S"/>
</dbReference>
<dbReference type="Bgee" id="380542">
    <property type="expression patterns" value="Expressed in egg cell and 19 other cell types or tissues"/>
</dbReference>
<dbReference type="GO" id="GO:0031965">
    <property type="term" value="C:nuclear membrane"/>
    <property type="evidence" value="ECO:0000250"/>
    <property type="project" value="UniProtKB"/>
</dbReference>
<dbReference type="GO" id="GO:0017080">
    <property type="term" value="F:sodium channel regulator activity"/>
    <property type="evidence" value="ECO:0000250"/>
    <property type="project" value="UniProtKB"/>
</dbReference>
<dbReference type="CDD" id="cd21494">
    <property type="entry name" value="TMEM168"/>
    <property type="match status" value="1"/>
</dbReference>
<dbReference type="InterPro" id="IPR029713">
    <property type="entry name" value="TMEM168"/>
</dbReference>
<dbReference type="PANTHER" id="PTHR14437">
    <property type="entry name" value="TRANSMEMBRANE PROTEIN 168"/>
    <property type="match status" value="1"/>
</dbReference>
<dbReference type="PANTHER" id="PTHR14437:SF2">
    <property type="entry name" value="TRANSMEMBRANE PROTEIN 168"/>
    <property type="match status" value="1"/>
</dbReference>
<evidence type="ECO:0000250" key="1">
    <source>
        <dbReference type="UniProtKB" id="Q91VX9"/>
    </source>
</evidence>
<evidence type="ECO:0000250" key="2">
    <source>
        <dbReference type="UniProtKB" id="Q9H0V1"/>
    </source>
</evidence>
<evidence type="ECO:0000255" key="3"/>
<evidence type="ECO:0000305" key="4"/>